<name>MUTL_RICPR</name>
<proteinExistence type="inferred from homology"/>
<protein>
    <recommendedName>
        <fullName>DNA mismatch repair protein MutL</fullName>
    </recommendedName>
</protein>
<evidence type="ECO:0000250" key="1"/>
<evidence type="ECO:0000305" key="2"/>
<gene>
    <name type="primary">mutL</name>
    <name type="ordered locus">RP880</name>
</gene>
<keyword id="KW-0227">DNA damage</keyword>
<keyword id="KW-0234">DNA repair</keyword>
<keyword id="KW-1185">Reference proteome</keyword>
<reference key="1">
    <citation type="journal article" date="1998" name="Nature">
        <title>The genome sequence of Rickettsia prowazekii and the origin of mitochondria.</title>
        <authorList>
            <person name="Andersson S.G.E."/>
            <person name="Zomorodipour A."/>
            <person name="Andersson J.O."/>
            <person name="Sicheritz-Ponten T."/>
            <person name="Alsmark U.C.M."/>
            <person name="Podowski R.M."/>
            <person name="Naeslund A.K."/>
            <person name="Eriksson A.-S."/>
            <person name="Winkler H.H."/>
            <person name="Kurland C.G."/>
        </authorList>
    </citation>
    <scope>NUCLEOTIDE SEQUENCE [LARGE SCALE GENOMIC DNA]</scope>
    <source>
        <strain>Madrid E</strain>
    </source>
</reference>
<feature type="chain" id="PRO_0000177965" description="DNA mismatch repair protein MutL">
    <location>
        <begin position="1"/>
        <end position="595"/>
    </location>
</feature>
<dbReference type="EMBL" id="AJ235273">
    <property type="protein sequence ID" value="CAA15302.1"/>
    <property type="molecule type" value="Genomic_DNA"/>
</dbReference>
<dbReference type="PIR" id="F71650">
    <property type="entry name" value="F71650"/>
</dbReference>
<dbReference type="RefSeq" id="NP_221226.1">
    <property type="nucleotide sequence ID" value="NC_000963.1"/>
</dbReference>
<dbReference type="RefSeq" id="WP_004596727.1">
    <property type="nucleotide sequence ID" value="NC_000963.1"/>
</dbReference>
<dbReference type="SMR" id="Q9ZC88"/>
<dbReference type="STRING" id="272947.gene:17555949"/>
<dbReference type="EnsemblBacteria" id="CAA15302">
    <property type="protein sequence ID" value="CAA15302"/>
    <property type="gene ID" value="CAA15302"/>
</dbReference>
<dbReference type="KEGG" id="rpr:RP880"/>
<dbReference type="PATRIC" id="fig|272947.5.peg.918"/>
<dbReference type="eggNOG" id="COG0323">
    <property type="taxonomic scope" value="Bacteria"/>
</dbReference>
<dbReference type="HOGENOM" id="CLU_004131_4_2_5"/>
<dbReference type="OrthoDB" id="9763467at2"/>
<dbReference type="Proteomes" id="UP000002480">
    <property type="component" value="Chromosome"/>
</dbReference>
<dbReference type="GO" id="GO:0032300">
    <property type="term" value="C:mismatch repair complex"/>
    <property type="evidence" value="ECO:0007669"/>
    <property type="project" value="InterPro"/>
</dbReference>
<dbReference type="GO" id="GO:0005524">
    <property type="term" value="F:ATP binding"/>
    <property type="evidence" value="ECO:0007669"/>
    <property type="project" value="InterPro"/>
</dbReference>
<dbReference type="GO" id="GO:0016887">
    <property type="term" value="F:ATP hydrolysis activity"/>
    <property type="evidence" value="ECO:0007669"/>
    <property type="project" value="InterPro"/>
</dbReference>
<dbReference type="GO" id="GO:0140664">
    <property type="term" value="F:ATP-dependent DNA damage sensor activity"/>
    <property type="evidence" value="ECO:0007669"/>
    <property type="project" value="InterPro"/>
</dbReference>
<dbReference type="GO" id="GO:0030983">
    <property type="term" value="F:mismatched DNA binding"/>
    <property type="evidence" value="ECO:0007669"/>
    <property type="project" value="InterPro"/>
</dbReference>
<dbReference type="GO" id="GO:0006298">
    <property type="term" value="P:mismatch repair"/>
    <property type="evidence" value="ECO:0007669"/>
    <property type="project" value="UniProtKB-UniRule"/>
</dbReference>
<dbReference type="CDD" id="cd16926">
    <property type="entry name" value="HATPase_MutL-MLH-PMS-like"/>
    <property type="match status" value="1"/>
</dbReference>
<dbReference type="CDD" id="cd00782">
    <property type="entry name" value="MutL_Trans"/>
    <property type="match status" value="1"/>
</dbReference>
<dbReference type="FunFam" id="3.30.565.10:FF:000003">
    <property type="entry name" value="DNA mismatch repair endonuclease MutL"/>
    <property type="match status" value="1"/>
</dbReference>
<dbReference type="Gene3D" id="3.30.230.10">
    <property type="match status" value="1"/>
</dbReference>
<dbReference type="Gene3D" id="3.30.565.10">
    <property type="entry name" value="Histidine kinase-like ATPase, C-terminal domain"/>
    <property type="match status" value="1"/>
</dbReference>
<dbReference type="Gene3D" id="3.30.1540.20">
    <property type="entry name" value="MutL, C-terminal domain, dimerisation subdomain"/>
    <property type="match status" value="1"/>
</dbReference>
<dbReference type="Gene3D" id="3.30.1370.100">
    <property type="entry name" value="MutL, C-terminal domain, regulatory subdomain"/>
    <property type="match status" value="1"/>
</dbReference>
<dbReference type="HAMAP" id="MF_00149">
    <property type="entry name" value="DNA_mis_repair"/>
    <property type="match status" value="1"/>
</dbReference>
<dbReference type="InterPro" id="IPR014762">
    <property type="entry name" value="DNA_mismatch_repair_CS"/>
</dbReference>
<dbReference type="InterPro" id="IPR020667">
    <property type="entry name" value="DNA_mismatch_repair_MutL"/>
</dbReference>
<dbReference type="InterPro" id="IPR013507">
    <property type="entry name" value="DNA_mismatch_S5_2-like"/>
</dbReference>
<dbReference type="InterPro" id="IPR036890">
    <property type="entry name" value="HATPase_C_sf"/>
</dbReference>
<dbReference type="InterPro" id="IPR002099">
    <property type="entry name" value="MutL/Mlh/PMS"/>
</dbReference>
<dbReference type="InterPro" id="IPR038973">
    <property type="entry name" value="MutL/Mlh/Pms-like"/>
</dbReference>
<dbReference type="InterPro" id="IPR014790">
    <property type="entry name" value="MutL_C"/>
</dbReference>
<dbReference type="InterPro" id="IPR042120">
    <property type="entry name" value="MutL_C_dimsub"/>
</dbReference>
<dbReference type="InterPro" id="IPR042121">
    <property type="entry name" value="MutL_C_regsub"/>
</dbReference>
<dbReference type="InterPro" id="IPR037198">
    <property type="entry name" value="MutL_C_sf"/>
</dbReference>
<dbReference type="InterPro" id="IPR020568">
    <property type="entry name" value="Ribosomal_Su5_D2-typ_SF"/>
</dbReference>
<dbReference type="InterPro" id="IPR014721">
    <property type="entry name" value="Ribsml_uS5_D2-typ_fold_subgr"/>
</dbReference>
<dbReference type="NCBIfam" id="TIGR00585">
    <property type="entry name" value="mutl"/>
    <property type="match status" value="1"/>
</dbReference>
<dbReference type="NCBIfam" id="NF000952">
    <property type="entry name" value="PRK00095.2-2"/>
    <property type="match status" value="1"/>
</dbReference>
<dbReference type="NCBIfam" id="NF000953">
    <property type="entry name" value="PRK00095.2-4"/>
    <property type="match status" value="1"/>
</dbReference>
<dbReference type="PANTHER" id="PTHR10073">
    <property type="entry name" value="DNA MISMATCH REPAIR PROTEIN MLH, PMS, MUTL"/>
    <property type="match status" value="1"/>
</dbReference>
<dbReference type="PANTHER" id="PTHR10073:SF12">
    <property type="entry name" value="DNA MISMATCH REPAIR PROTEIN MLH1"/>
    <property type="match status" value="1"/>
</dbReference>
<dbReference type="Pfam" id="PF01119">
    <property type="entry name" value="DNA_mis_repair"/>
    <property type="match status" value="1"/>
</dbReference>
<dbReference type="Pfam" id="PF13589">
    <property type="entry name" value="HATPase_c_3"/>
    <property type="match status" value="1"/>
</dbReference>
<dbReference type="Pfam" id="PF08676">
    <property type="entry name" value="MutL_C"/>
    <property type="match status" value="1"/>
</dbReference>
<dbReference type="SMART" id="SM01340">
    <property type="entry name" value="DNA_mis_repair"/>
    <property type="match status" value="1"/>
</dbReference>
<dbReference type="SMART" id="SM00853">
    <property type="entry name" value="MutL_C"/>
    <property type="match status" value="1"/>
</dbReference>
<dbReference type="SUPFAM" id="SSF55874">
    <property type="entry name" value="ATPase domain of HSP90 chaperone/DNA topoisomerase II/histidine kinase"/>
    <property type="match status" value="1"/>
</dbReference>
<dbReference type="SUPFAM" id="SSF118116">
    <property type="entry name" value="DNA mismatch repair protein MutL"/>
    <property type="match status" value="1"/>
</dbReference>
<dbReference type="SUPFAM" id="SSF54211">
    <property type="entry name" value="Ribosomal protein S5 domain 2-like"/>
    <property type="match status" value="1"/>
</dbReference>
<dbReference type="PROSITE" id="PS00058">
    <property type="entry name" value="DNA_MISMATCH_REPAIR_1"/>
    <property type="match status" value="1"/>
</dbReference>
<sequence length="595" mass="67477">MTIKFLSESTINRIAAGEVIERPASVVKELVENAIDGGSTKIDIILERAGKNLIIVSDDGIGMTDKELEIAVKRHTTSKLNESDFFNIHTFGFRGEALASIAAISKMLITSKKREADKAFQIKLIGGNKQQITVSVHNEGTKIEVRDLFFATPARLKFLRSDKTELAASIDIVKKIALAHPRISFNLIHDNKNLLKLKGQNKDSETNLKQRIIDVIGDVFIKNAAYIDFKTPDFSICGYTSIPTYNKASSEDQFLFINNRPIKDKLLQVALRVAYQDYLARDRYALCVIFLQIDPQLVDVNVHPAKAEVRFHDPNYVRNILIEAIKNALTNKSQITATTIGSDKNSLVNKEPTIHKATNVNSKASEYTSFNFKRNTAYHTLPYGKIEQEVGKCIEHNNQSHKQYKFGVAKAQLHTTYIISQTEDSIVIIDQHAAYERLGYAKIKYCLKNGELVKQRLLIPEIVELSSQKKADCLYENREKLFKLSLTIEKFGEKSIIVTEIPNILGDVNVQKLIQDLADHLSDFAKNMPLKELIEHVIKIYICHYSIRAARKLSADEMNSLLRQMENMSFSAQCNNNRPTYIELKLKDIELLFRL</sequence>
<organism>
    <name type="scientific">Rickettsia prowazekii (strain Madrid E)</name>
    <dbReference type="NCBI Taxonomy" id="272947"/>
    <lineage>
        <taxon>Bacteria</taxon>
        <taxon>Pseudomonadati</taxon>
        <taxon>Pseudomonadota</taxon>
        <taxon>Alphaproteobacteria</taxon>
        <taxon>Rickettsiales</taxon>
        <taxon>Rickettsiaceae</taxon>
        <taxon>Rickettsieae</taxon>
        <taxon>Rickettsia</taxon>
        <taxon>typhus group</taxon>
    </lineage>
</organism>
<accession>Q9ZC88</accession>
<comment type="function">
    <text evidence="1">This protein is involved in the repair of mismatches in DNA. It is required for dam-dependent methyl-directed DNA mismatch repair. May act as a 'molecular matchmaker', a protein that promotes the formation of a stable complex between two or more DNA-binding proteins in an ATP-dependent manner without itself being part of a final effector complex (By similarity).</text>
</comment>
<comment type="similarity">
    <text evidence="2">Belongs to the DNA mismatch repair MutL/HexB family.</text>
</comment>